<gene>
    <name evidence="8" type="primary">crim</name>
    <name evidence="8" type="ORF">CG6038</name>
</gene>
<evidence type="ECO:0000255" key="1"/>
<evidence type="ECO:0000255" key="2">
    <source>
        <dbReference type="PROSITE-ProRule" id="PRU00498"/>
    </source>
</evidence>
<evidence type="ECO:0000269" key="3">
    <source>
    </source>
</evidence>
<evidence type="ECO:0000303" key="4">
    <source>
    </source>
</evidence>
<evidence type="ECO:0000305" key="5"/>
<evidence type="ECO:0000312" key="6">
    <source>
        <dbReference type="EMBL" id="AAL28316.1"/>
    </source>
</evidence>
<evidence type="ECO:0000312" key="7">
    <source>
        <dbReference type="EMBL" id="ANY27660.1"/>
    </source>
</evidence>
<evidence type="ECO:0000312" key="8">
    <source>
        <dbReference type="FlyBase" id="FBgn0036198"/>
    </source>
</evidence>
<evidence type="ECO:0000312" key="9">
    <source>
        <dbReference type="Proteomes" id="UP000000803"/>
    </source>
</evidence>
<organism evidence="9">
    <name type="scientific">Drosophila melanogaster</name>
    <name type="common">Fruit fly</name>
    <dbReference type="NCBI Taxonomy" id="7227"/>
    <lineage>
        <taxon>Eukaryota</taxon>
        <taxon>Metazoa</taxon>
        <taxon>Ecdysozoa</taxon>
        <taxon>Arthropoda</taxon>
        <taxon>Hexapoda</taxon>
        <taxon>Insecta</taxon>
        <taxon>Pterygota</taxon>
        <taxon>Neoptera</taxon>
        <taxon>Endopterygota</taxon>
        <taxon>Diptera</taxon>
        <taxon>Brachycera</taxon>
        <taxon>Muscomorpha</taxon>
        <taxon>Ephydroidea</taxon>
        <taxon>Drosophilidae</taxon>
        <taxon>Drosophila</taxon>
        <taxon>Sophophora</taxon>
    </lineage>
</organism>
<feature type="signal peptide" evidence="1">
    <location>
        <begin position="1"/>
        <end position="22"/>
    </location>
</feature>
<feature type="chain" id="PRO_5015100625" description="UPAR/Ly6 domain-containing protein crim" evidence="1">
    <location>
        <begin position="23"/>
        <end position="135"/>
    </location>
</feature>
<feature type="propeptide" id="PRO_0000459698" description="Removed in mature form" evidence="1">
    <location>
        <begin position="136"/>
        <end position="158"/>
    </location>
</feature>
<feature type="topological domain" description="Extracellular" evidence="5">
    <location>
        <begin position="23"/>
        <end position="136"/>
    </location>
</feature>
<feature type="transmembrane region" description="Helical" evidence="1">
    <location>
        <begin position="137"/>
        <end position="157"/>
    </location>
</feature>
<feature type="topological domain" description="Cytoplasmic" evidence="5">
    <location>
        <position position="158"/>
    </location>
</feature>
<feature type="lipid moiety-binding region" description="GPI-anchor amidated asparagine" evidence="1">
    <location>
        <position position="135"/>
    </location>
</feature>
<feature type="glycosylation site" description="N-linked (GlcNAc...) asparagine" evidence="2">
    <location>
        <position position="107"/>
    </location>
</feature>
<dbReference type="EMBL" id="AE014296">
    <property type="protein sequence ID" value="AAF50021.1"/>
    <property type="molecule type" value="Genomic_DNA"/>
</dbReference>
<dbReference type="EMBL" id="AY060768">
    <property type="protein sequence ID" value="AAL28316.1"/>
    <property type="molecule type" value="mRNA"/>
</dbReference>
<dbReference type="EMBL" id="KX531850">
    <property type="protein sequence ID" value="ANY27660.1"/>
    <property type="molecule type" value="mRNA"/>
</dbReference>
<dbReference type="RefSeq" id="NP_648500.1">
    <property type="nucleotide sequence ID" value="NM_140243.4"/>
</dbReference>
<dbReference type="FunCoup" id="Q9VTM6">
    <property type="interactions" value="7"/>
</dbReference>
<dbReference type="STRING" id="7227.FBpp0075854"/>
<dbReference type="GlyGen" id="Q9VTM6">
    <property type="glycosylation" value="2 sites"/>
</dbReference>
<dbReference type="PaxDb" id="7227-FBpp0075854"/>
<dbReference type="DNASU" id="39321"/>
<dbReference type="EnsemblMetazoa" id="FBtr0076123">
    <property type="protein sequence ID" value="FBpp0075854"/>
    <property type="gene ID" value="FBgn0036198"/>
</dbReference>
<dbReference type="GeneID" id="39321"/>
<dbReference type="KEGG" id="dme:Dmel_CG6038"/>
<dbReference type="UCSC" id="CG6038-RA">
    <property type="organism name" value="d. melanogaster"/>
</dbReference>
<dbReference type="AGR" id="FB:FBgn0036198"/>
<dbReference type="CTD" id="39321"/>
<dbReference type="FlyBase" id="FBgn0036198">
    <property type="gene designation" value="crim"/>
</dbReference>
<dbReference type="VEuPathDB" id="VectorBase:FBgn0036198"/>
<dbReference type="eggNOG" id="ENOG502S2AI">
    <property type="taxonomic scope" value="Eukaryota"/>
</dbReference>
<dbReference type="HOGENOM" id="CLU_142458_0_0_1"/>
<dbReference type="InParanoid" id="Q9VTM6"/>
<dbReference type="OMA" id="TDTTFCF"/>
<dbReference type="OrthoDB" id="6249205at2759"/>
<dbReference type="BioGRID-ORCS" id="39321">
    <property type="hits" value="0 hits in 1 CRISPR screen"/>
</dbReference>
<dbReference type="GenomeRNAi" id="39321"/>
<dbReference type="Proteomes" id="UP000000803">
    <property type="component" value="Chromosome 3L"/>
</dbReference>
<dbReference type="Bgee" id="FBgn0036198">
    <property type="expression patterns" value="Expressed in seminal fluid secreting gland and 121 other cell types or tissues"/>
</dbReference>
<dbReference type="GO" id="GO:0005918">
    <property type="term" value="C:septate junction"/>
    <property type="evidence" value="ECO:0000314"/>
    <property type="project" value="FlyBase"/>
</dbReference>
<dbReference type="GO" id="GO:0098552">
    <property type="term" value="C:side of membrane"/>
    <property type="evidence" value="ECO:0007669"/>
    <property type="project" value="UniProtKB-KW"/>
</dbReference>
<dbReference type="GO" id="GO:0035002">
    <property type="term" value="P:liquid clearance, open tracheal system"/>
    <property type="evidence" value="ECO:0000315"/>
    <property type="project" value="FlyBase"/>
</dbReference>
<dbReference type="GO" id="GO:0032222">
    <property type="term" value="P:regulation of synaptic transmission, cholinergic"/>
    <property type="evidence" value="ECO:0007669"/>
    <property type="project" value="InterPro"/>
</dbReference>
<dbReference type="GO" id="GO:0035151">
    <property type="term" value="P:regulation of tube size, open tracheal system"/>
    <property type="evidence" value="ECO:0000315"/>
    <property type="project" value="FlyBase"/>
</dbReference>
<dbReference type="GO" id="GO:0048511">
    <property type="term" value="P:rhythmic process"/>
    <property type="evidence" value="ECO:0007669"/>
    <property type="project" value="UniProtKB-KW"/>
</dbReference>
<dbReference type="GO" id="GO:0019991">
    <property type="term" value="P:septate junction assembly"/>
    <property type="evidence" value="ECO:0000315"/>
    <property type="project" value="FlyBase"/>
</dbReference>
<dbReference type="GO" id="GO:0030431">
    <property type="term" value="P:sleep"/>
    <property type="evidence" value="ECO:0007669"/>
    <property type="project" value="InterPro"/>
</dbReference>
<dbReference type="CDD" id="cd23591">
    <property type="entry name" value="TFP_LU_ECD_Crim"/>
    <property type="match status" value="1"/>
</dbReference>
<dbReference type="InterPro" id="IPR031424">
    <property type="entry name" value="QVR-like"/>
</dbReference>
<dbReference type="InterPro" id="IPR050975">
    <property type="entry name" value="Sleep_regulator"/>
</dbReference>
<dbReference type="PANTHER" id="PTHR33562">
    <property type="entry name" value="ATILLA, ISOFORM B-RELATED-RELATED"/>
    <property type="match status" value="1"/>
</dbReference>
<dbReference type="PANTHER" id="PTHR33562:SF28">
    <property type="entry name" value="PROTEIN QUIVER"/>
    <property type="match status" value="1"/>
</dbReference>
<dbReference type="Pfam" id="PF17064">
    <property type="entry name" value="QVR"/>
    <property type="match status" value="1"/>
</dbReference>
<name>CRIM_DROME</name>
<proteinExistence type="evidence at transcript level"/>
<accession>Q9VTM6</accession>
<sequence length="158" mass="17744">MHYHTNLIAALLLAALIHEGSAIWCYRCTSATPGCAEKFNWRGIGFLGEHCPEPDDICVKVTERRGARETITRDCLSALSFRKDIPADKYEGCRPAAHDEKLANYVNHTIKEHDVRRDYYTDTTFCFCFLDHRCNGASGLQTSAVIGLLTLIPALLLR</sequence>
<protein>
    <recommendedName>
        <fullName evidence="5">UPAR/Ly6 domain-containing protein crim</fullName>
    </recommendedName>
    <alternativeName>
        <fullName evidence="4">Protein crimpled</fullName>
    </alternativeName>
</protein>
<keyword id="KW-0090">Biological rhythms</keyword>
<keyword id="KW-0325">Glycoprotein</keyword>
<keyword id="KW-0336">GPI-anchor</keyword>
<keyword id="KW-0449">Lipoprotein</keyword>
<keyword id="KW-0472">Membrane</keyword>
<keyword id="KW-1185">Reference proteome</keyword>
<keyword id="KW-0732">Signal</keyword>
<keyword id="KW-0812">Transmembrane</keyword>
<keyword id="KW-1133">Transmembrane helix</keyword>
<comment type="function">
    <text evidence="3">Required for septate junction assembly possibly by organizing the preassembly and transport of septate junction proteins (PubMed:20570942). Involved in epithelial cell septate junction-mediated paracellular barrier functions of trachea, hindgut and salivary gland (PubMed:20570942).</text>
</comment>
<comment type="subcellular location">
    <subcellularLocation>
        <location evidence="1">Membrane</location>
        <topology evidence="1">Lipid-anchor</topology>
        <topology evidence="1">GPI-anchor</topology>
    </subcellularLocation>
</comment>
<comment type="disruption phenotype">
    <text evidence="3">Conditional RNAi mediated knock-down in tracheal cells leads to aberrant tracheal dorsal trunk development resulting in tracheal tube size defects (PubMed:20570942). Conditional RNAi knock-down in tracheal cells compromises epithelial paracellular barrier function in trachea due to reduced and irregular septate junction formation (PubMed:20570942).</text>
</comment>
<comment type="similarity">
    <text evidence="5">Belongs to the quiver family.</text>
</comment>
<reference evidence="9" key="1">
    <citation type="journal article" date="2000" name="Science">
        <title>The genome sequence of Drosophila melanogaster.</title>
        <authorList>
            <person name="Adams M.D."/>
            <person name="Celniker S.E."/>
            <person name="Holt R.A."/>
            <person name="Evans C.A."/>
            <person name="Gocayne J.D."/>
            <person name="Amanatides P.G."/>
            <person name="Scherer S.E."/>
            <person name="Li P.W."/>
            <person name="Hoskins R.A."/>
            <person name="Galle R.F."/>
            <person name="George R.A."/>
            <person name="Lewis S.E."/>
            <person name="Richards S."/>
            <person name="Ashburner M."/>
            <person name="Henderson S.N."/>
            <person name="Sutton G.G."/>
            <person name="Wortman J.R."/>
            <person name="Yandell M.D."/>
            <person name="Zhang Q."/>
            <person name="Chen L.X."/>
            <person name="Brandon R.C."/>
            <person name="Rogers Y.-H.C."/>
            <person name="Blazej R.G."/>
            <person name="Champe M."/>
            <person name="Pfeiffer B.D."/>
            <person name="Wan K.H."/>
            <person name="Doyle C."/>
            <person name="Baxter E.G."/>
            <person name="Helt G."/>
            <person name="Nelson C.R."/>
            <person name="Miklos G.L.G."/>
            <person name="Abril J.F."/>
            <person name="Agbayani A."/>
            <person name="An H.-J."/>
            <person name="Andrews-Pfannkoch C."/>
            <person name="Baldwin D."/>
            <person name="Ballew R.M."/>
            <person name="Basu A."/>
            <person name="Baxendale J."/>
            <person name="Bayraktaroglu L."/>
            <person name="Beasley E.M."/>
            <person name="Beeson K.Y."/>
            <person name="Benos P.V."/>
            <person name="Berman B.P."/>
            <person name="Bhandari D."/>
            <person name="Bolshakov S."/>
            <person name="Borkova D."/>
            <person name="Botchan M.R."/>
            <person name="Bouck J."/>
            <person name="Brokstein P."/>
            <person name="Brottier P."/>
            <person name="Burtis K.C."/>
            <person name="Busam D.A."/>
            <person name="Butler H."/>
            <person name="Cadieu E."/>
            <person name="Center A."/>
            <person name="Chandra I."/>
            <person name="Cherry J.M."/>
            <person name="Cawley S."/>
            <person name="Dahlke C."/>
            <person name="Davenport L.B."/>
            <person name="Davies P."/>
            <person name="de Pablos B."/>
            <person name="Delcher A."/>
            <person name="Deng Z."/>
            <person name="Mays A.D."/>
            <person name="Dew I."/>
            <person name="Dietz S.M."/>
            <person name="Dodson K."/>
            <person name="Doup L.E."/>
            <person name="Downes M."/>
            <person name="Dugan-Rocha S."/>
            <person name="Dunkov B.C."/>
            <person name="Dunn P."/>
            <person name="Durbin K.J."/>
            <person name="Evangelista C.C."/>
            <person name="Ferraz C."/>
            <person name="Ferriera S."/>
            <person name="Fleischmann W."/>
            <person name="Fosler C."/>
            <person name="Gabrielian A.E."/>
            <person name="Garg N.S."/>
            <person name="Gelbart W.M."/>
            <person name="Glasser K."/>
            <person name="Glodek A."/>
            <person name="Gong F."/>
            <person name="Gorrell J.H."/>
            <person name="Gu Z."/>
            <person name="Guan P."/>
            <person name="Harris M."/>
            <person name="Harris N.L."/>
            <person name="Harvey D.A."/>
            <person name="Heiman T.J."/>
            <person name="Hernandez J.R."/>
            <person name="Houck J."/>
            <person name="Hostin D."/>
            <person name="Houston K.A."/>
            <person name="Howland T.J."/>
            <person name="Wei M.-H."/>
            <person name="Ibegwam C."/>
            <person name="Jalali M."/>
            <person name="Kalush F."/>
            <person name="Karpen G.H."/>
            <person name="Ke Z."/>
            <person name="Kennison J.A."/>
            <person name="Ketchum K.A."/>
            <person name="Kimmel B.E."/>
            <person name="Kodira C.D."/>
            <person name="Kraft C.L."/>
            <person name="Kravitz S."/>
            <person name="Kulp D."/>
            <person name="Lai Z."/>
            <person name="Lasko P."/>
            <person name="Lei Y."/>
            <person name="Levitsky A.A."/>
            <person name="Li J.H."/>
            <person name="Li Z."/>
            <person name="Liang Y."/>
            <person name="Lin X."/>
            <person name="Liu X."/>
            <person name="Mattei B."/>
            <person name="McIntosh T.C."/>
            <person name="McLeod M.P."/>
            <person name="McPherson D."/>
            <person name="Merkulov G."/>
            <person name="Milshina N.V."/>
            <person name="Mobarry C."/>
            <person name="Morris J."/>
            <person name="Moshrefi A."/>
            <person name="Mount S.M."/>
            <person name="Moy M."/>
            <person name="Murphy B."/>
            <person name="Murphy L."/>
            <person name="Muzny D.M."/>
            <person name="Nelson D.L."/>
            <person name="Nelson D.R."/>
            <person name="Nelson K.A."/>
            <person name="Nixon K."/>
            <person name="Nusskern D.R."/>
            <person name="Pacleb J.M."/>
            <person name="Palazzolo M."/>
            <person name="Pittman G.S."/>
            <person name="Pan S."/>
            <person name="Pollard J."/>
            <person name="Puri V."/>
            <person name="Reese M.G."/>
            <person name="Reinert K."/>
            <person name="Remington K."/>
            <person name="Saunders R.D.C."/>
            <person name="Scheeler F."/>
            <person name="Shen H."/>
            <person name="Shue B.C."/>
            <person name="Siden-Kiamos I."/>
            <person name="Simpson M."/>
            <person name="Skupski M.P."/>
            <person name="Smith T.J."/>
            <person name="Spier E."/>
            <person name="Spradling A.C."/>
            <person name="Stapleton M."/>
            <person name="Strong R."/>
            <person name="Sun E."/>
            <person name="Svirskas R."/>
            <person name="Tector C."/>
            <person name="Turner R."/>
            <person name="Venter E."/>
            <person name="Wang A.H."/>
            <person name="Wang X."/>
            <person name="Wang Z.-Y."/>
            <person name="Wassarman D.A."/>
            <person name="Weinstock G.M."/>
            <person name="Weissenbach J."/>
            <person name="Williams S.M."/>
            <person name="Woodage T."/>
            <person name="Worley K.C."/>
            <person name="Wu D."/>
            <person name="Yang S."/>
            <person name="Yao Q.A."/>
            <person name="Ye J."/>
            <person name="Yeh R.-F."/>
            <person name="Zaveri J.S."/>
            <person name="Zhan M."/>
            <person name="Zhang G."/>
            <person name="Zhao Q."/>
            <person name="Zheng L."/>
            <person name="Zheng X.H."/>
            <person name="Zhong F.N."/>
            <person name="Zhong W."/>
            <person name="Zhou X."/>
            <person name="Zhu S.C."/>
            <person name="Zhu X."/>
            <person name="Smith H.O."/>
            <person name="Gibbs R.A."/>
            <person name="Myers E.W."/>
            <person name="Rubin G.M."/>
            <person name="Venter J.C."/>
        </authorList>
    </citation>
    <scope>NUCLEOTIDE SEQUENCE [LARGE SCALE GENOMIC DNA]</scope>
    <source>
        <strain evidence="9">Berkeley</strain>
    </source>
</reference>
<reference evidence="9" key="2">
    <citation type="journal article" date="2002" name="Genome Biol.">
        <title>Annotation of the Drosophila melanogaster euchromatic genome: a systematic review.</title>
        <authorList>
            <person name="Misra S."/>
            <person name="Crosby M.A."/>
            <person name="Mungall C.J."/>
            <person name="Matthews B.B."/>
            <person name="Campbell K.S."/>
            <person name="Hradecky P."/>
            <person name="Huang Y."/>
            <person name="Kaminker J.S."/>
            <person name="Millburn G.H."/>
            <person name="Prochnik S.E."/>
            <person name="Smith C.D."/>
            <person name="Tupy J.L."/>
            <person name="Whitfield E.J."/>
            <person name="Bayraktaroglu L."/>
            <person name="Berman B.P."/>
            <person name="Bettencourt B.R."/>
            <person name="Celniker S.E."/>
            <person name="de Grey A.D.N.J."/>
            <person name="Drysdale R.A."/>
            <person name="Harris N.L."/>
            <person name="Richter J."/>
            <person name="Russo S."/>
            <person name="Schroeder A.J."/>
            <person name="Shu S.Q."/>
            <person name="Stapleton M."/>
            <person name="Yamada C."/>
            <person name="Ashburner M."/>
            <person name="Gelbart W.M."/>
            <person name="Rubin G.M."/>
            <person name="Lewis S.E."/>
        </authorList>
    </citation>
    <scope>GENOME REANNOTATION</scope>
    <source>
        <strain evidence="9">Berkeley</strain>
    </source>
</reference>
<reference evidence="6" key="3">
    <citation type="journal article" date="2002" name="Genome Biol.">
        <title>A Drosophila full-length cDNA resource.</title>
        <authorList>
            <person name="Stapleton M."/>
            <person name="Carlson J.W."/>
            <person name="Brokstein P."/>
            <person name="Yu C."/>
            <person name="Champe M."/>
            <person name="George R.A."/>
            <person name="Guarin H."/>
            <person name="Kronmiller B."/>
            <person name="Pacleb J.M."/>
            <person name="Park S."/>
            <person name="Wan K.H."/>
            <person name="Rubin G.M."/>
            <person name="Celniker S.E."/>
        </authorList>
    </citation>
    <scope>NUCLEOTIDE SEQUENCE [LARGE SCALE MRNA]</scope>
    <source>
        <strain evidence="6">Berkeley</strain>
        <tissue evidence="6">Head</tissue>
    </source>
</reference>
<reference evidence="7" key="4">
    <citation type="submission" date="2016-07" db="EMBL/GenBank/DDBJ databases">
        <authorList>
            <person name="Wan K."/>
            <person name="Booth B."/>
            <person name="Spirohn K."/>
            <person name="Hao T."/>
            <person name="Hu Y."/>
            <person name="Calderwood M."/>
            <person name="Hill D."/>
            <person name="Mohr S."/>
            <person name="Vidal M."/>
            <person name="Celniker S."/>
            <person name="Perrimon N."/>
        </authorList>
    </citation>
    <scope>NUCLEOTIDE SEQUENCE [LARGE SCALE MRNA]</scope>
</reference>
<reference evidence="5" key="5">
    <citation type="journal article" date="2010" name="Development">
        <title>Crooked, coiled and crimpled are three Ly6-like proteins required for proper localization of septate junction components.</title>
        <authorList>
            <person name="Nilton A."/>
            <person name="Oshima K."/>
            <person name="Zare F."/>
            <person name="Byri S."/>
            <person name="Nannmark U."/>
            <person name="Nyberg K.G."/>
            <person name="Fehon R.G."/>
            <person name="Uv A.E."/>
        </authorList>
    </citation>
    <scope>FUNCTION</scope>
    <scope>DISRUPTION PHENOTYPE</scope>
</reference>